<name>AB26B_ARATH</name>
<gene>
    <name type="primary">ABCB26</name>
    <name type="synonym">TAP1</name>
    <name type="ordered locus">At1g70610</name>
    <name type="ORF">F24J13.18</name>
    <name type="ORF">F5A18.21</name>
</gene>
<dbReference type="EMBL" id="AY078409">
    <property type="protein sequence ID" value="AAL85485.1"/>
    <property type="molecule type" value="mRNA"/>
</dbReference>
<dbReference type="EMBL" id="AC010796">
    <property type="protein sequence ID" value="AAG52466.1"/>
    <property type="status" value="ALT_SEQ"/>
    <property type="molecule type" value="Genomic_DNA"/>
</dbReference>
<dbReference type="EMBL" id="AC011663">
    <property type="protein sequence ID" value="AAG52334.1"/>
    <property type="status" value="ALT_SEQ"/>
    <property type="molecule type" value="Genomic_DNA"/>
</dbReference>
<dbReference type="EMBL" id="CP002684">
    <property type="protein sequence ID" value="AEE35088.1"/>
    <property type="molecule type" value="Genomic_DNA"/>
</dbReference>
<dbReference type="EMBL" id="AK228750">
    <property type="protein sequence ID" value="BAF00650.1"/>
    <property type="molecule type" value="mRNA"/>
</dbReference>
<dbReference type="PIR" id="C96730">
    <property type="entry name" value="C96730"/>
</dbReference>
<dbReference type="RefSeq" id="NP_177218.3">
    <property type="nucleotide sequence ID" value="NM_105729.6"/>
</dbReference>
<dbReference type="SMR" id="Q8RY46"/>
<dbReference type="BioGRID" id="28618">
    <property type="interactions" value="13"/>
</dbReference>
<dbReference type="FunCoup" id="Q8RY46">
    <property type="interactions" value="166"/>
</dbReference>
<dbReference type="IntAct" id="Q8RY46">
    <property type="interactions" value="13"/>
</dbReference>
<dbReference type="STRING" id="3702.Q8RY46"/>
<dbReference type="PaxDb" id="3702-AT1G70610.1"/>
<dbReference type="ProteomicsDB" id="244582"/>
<dbReference type="EnsemblPlants" id="AT1G70610.1">
    <property type="protein sequence ID" value="AT1G70610.1"/>
    <property type="gene ID" value="AT1G70610"/>
</dbReference>
<dbReference type="GeneID" id="843398"/>
<dbReference type="Gramene" id="AT1G70610.1">
    <property type="protein sequence ID" value="AT1G70610.1"/>
    <property type="gene ID" value="AT1G70610"/>
</dbReference>
<dbReference type="KEGG" id="ath:AT1G70610"/>
<dbReference type="Araport" id="AT1G70610"/>
<dbReference type="TAIR" id="AT1G70610">
    <property type="gene designation" value="ABCB26"/>
</dbReference>
<dbReference type="eggNOG" id="KOG0058">
    <property type="taxonomic scope" value="Eukaryota"/>
</dbReference>
<dbReference type="HOGENOM" id="CLU_000604_84_3_1"/>
<dbReference type="InParanoid" id="Q8RY46"/>
<dbReference type="OMA" id="CRLYEPQ"/>
<dbReference type="OrthoDB" id="6500128at2759"/>
<dbReference type="PhylomeDB" id="Q8RY46"/>
<dbReference type="PRO" id="PR:Q8RY46"/>
<dbReference type="Proteomes" id="UP000006548">
    <property type="component" value="Chromosome 1"/>
</dbReference>
<dbReference type="ExpressionAtlas" id="Q8RY46">
    <property type="expression patterns" value="baseline and differential"/>
</dbReference>
<dbReference type="GO" id="GO:0009507">
    <property type="term" value="C:chloroplast"/>
    <property type="evidence" value="ECO:0007005"/>
    <property type="project" value="TAIR"/>
</dbReference>
<dbReference type="GO" id="GO:0009941">
    <property type="term" value="C:chloroplast envelope"/>
    <property type="evidence" value="ECO:0007005"/>
    <property type="project" value="TAIR"/>
</dbReference>
<dbReference type="GO" id="GO:0031969">
    <property type="term" value="C:chloroplast membrane"/>
    <property type="evidence" value="ECO:0007669"/>
    <property type="project" value="UniProtKB-SubCell"/>
</dbReference>
<dbReference type="GO" id="GO:0005739">
    <property type="term" value="C:mitochondrion"/>
    <property type="evidence" value="ECO:0007005"/>
    <property type="project" value="TAIR"/>
</dbReference>
<dbReference type="GO" id="GO:0140359">
    <property type="term" value="F:ABC-type transporter activity"/>
    <property type="evidence" value="ECO:0007669"/>
    <property type="project" value="InterPro"/>
</dbReference>
<dbReference type="GO" id="GO:0005524">
    <property type="term" value="F:ATP binding"/>
    <property type="evidence" value="ECO:0007669"/>
    <property type="project" value="UniProtKB-KW"/>
</dbReference>
<dbReference type="GO" id="GO:0016887">
    <property type="term" value="F:ATP hydrolysis activity"/>
    <property type="evidence" value="ECO:0007669"/>
    <property type="project" value="InterPro"/>
</dbReference>
<dbReference type="CDD" id="cd18572">
    <property type="entry name" value="ABC_6TM_TAP"/>
    <property type="match status" value="1"/>
</dbReference>
<dbReference type="FunFam" id="1.20.1560.10:FF:000059">
    <property type="entry name" value="ABC transporter B family member 26, chloroplastic"/>
    <property type="match status" value="1"/>
</dbReference>
<dbReference type="FunFam" id="3.40.50.300:FF:000218">
    <property type="entry name" value="Multidrug ABC transporter ATP-binding protein"/>
    <property type="match status" value="1"/>
</dbReference>
<dbReference type="Gene3D" id="1.20.1560.10">
    <property type="entry name" value="ABC transporter type 1, transmembrane domain"/>
    <property type="match status" value="1"/>
</dbReference>
<dbReference type="Gene3D" id="3.40.50.300">
    <property type="entry name" value="P-loop containing nucleotide triphosphate hydrolases"/>
    <property type="match status" value="1"/>
</dbReference>
<dbReference type="InterPro" id="IPR003593">
    <property type="entry name" value="AAA+_ATPase"/>
</dbReference>
<dbReference type="InterPro" id="IPR011527">
    <property type="entry name" value="ABC1_TM_dom"/>
</dbReference>
<dbReference type="InterPro" id="IPR036640">
    <property type="entry name" value="ABC1_TM_sf"/>
</dbReference>
<dbReference type="InterPro" id="IPR003439">
    <property type="entry name" value="ABC_transporter-like_ATP-bd"/>
</dbReference>
<dbReference type="InterPro" id="IPR017871">
    <property type="entry name" value="ABC_transporter-like_CS"/>
</dbReference>
<dbReference type="InterPro" id="IPR027417">
    <property type="entry name" value="P-loop_NTPase"/>
</dbReference>
<dbReference type="InterPro" id="IPR039421">
    <property type="entry name" value="Type_1_exporter"/>
</dbReference>
<dbReference type="PANTHER" id="PTHR43394:SF19">
    <property type="entry name" value="ABC TRANSPORTER B FAMILY"/>
    <property type="match status" value="1"/>
</dbReference>
<dbReference type="PANTHER" id="PTHR43394">
    <property type="entry name" value="ATP-DEPENDENT PERMEASE MDL1, MITOCHONDRIAL"/>
    <property type="match status" value="1"/>
</dbReference>
<dbReference type="Pfam" id="PF00664">
    <property type="entry name" value="ABC_membrane"/>
    <property type="match status" value="1"/>
</dbReference>
<dbReference type="Pfam" id="PF00005">
    <property type="entry name" value="ABC_tran"/>
    <property type="match status" value="1"/>
</dbReference>
<dbReference type="PIRSF" id="PIRSF002773">
    <property type="entry name" value="ABC_prm/ATPase_B"/>
    <property type="match status" value="1"/>
</dbReference>
<dbReference type="SMART" id="SM00382">
    <property type="entry name" value="AAA"/>
    <property type="match status" value="1"/>
</dbReference>
<dbReference type="SUPFAM" id="SSF90123">
    <property type="entry name" value="ABC transporter transmembrane region"/>
    <property type="match status" value="1"/>
</dbReference>
<dbReference type="SUPFAM" id="SSF52540">
    <property type="entry name" value="P-loop containing nucleoside triphosphate hydrolases"/>
    <property type="match status" value="1"/>
</dbReference>
<dbReference type="PROSITE" id="PS50929">
    <property type="entry name" value="ABC_TM1F"/>
    <property type="match status" value="1"/>
</dbReference>
<dbReference type="PROSITE" id="PS00211">
    <property type="entry name" value="ABC_TRANSPORTER_1"/>
    <property type="match status" value="1"/>
</dbReference>
<dbReference type="PROSITE" id="PS50893">
    <property type="entry name" value="ABC_TRANSPORTER_2"/>
    <property type="match status" value="1"/>
</dbReference>
<protein>
    <recommendedName>
        <fullName>ABC transporter B family member 26, chloroplastic</fullName>
        <shortName>ABC transporter ABCB.26</shortName>
        <shortName>AtABCB26</shortName>
    </recommendedName>
    <alternativeName>
        <fullName>Antigen peptide transporter-like 1</fullName>
    </alternativeName>
    <alternativeName>
        <fullName>Transporter associated with antigen processing-like protein 1</fullName>
        <shortName>AtTAP1</shortName>
    </alternativeName>
</protein>
<feature type="transit peptide" description="Chloroplast" evidence="1">
    <location>
        <begin position="1"/>
        <end position="59"/>
    </location>
</feature>
<feature type="chain" id="PRO_0000300102" description="ABC transporter B family member 26, chloroplastic">
    <location>
        <begin position="60"/>
        <end position="700"/>
    </location>
</feature>
<feature type="transmembrane region" description="Helical" evidence="3">
    <location>
        <begin position="137"/>
        <end position="157"/>
    </location>
</feature>
<feature type="transmembrane region" description="Helical" evidence="3">
    <location>
        <begin position="182"/>
        <end position="202"/>
    </location>
</feature>
<feature type="transmembrane region" description="Helical" evidence="3">
    <location>
        <begin position="268"/>
        <end position="288"/>
    </location>
</feature>
<feature type="domain" description="ABC transmembrane type-1" evidence="3">
    <location>
        <begin position="139"/>
        <end position="421"/>
    </location>
</feature>
<feature type="domain" description="ABC transporter" evidence="2">
    <location>
        <begin position="455"/>
        <end position="694"/>
    </location>
</feature>
<feature type="binding site" evidence="2">
    <location>
        <begin position="490"/>
        <end position="497"/>
    </location>
    <ligand>
        <name>ATP</name>
        <dbReference type="ChEBI" id="CHEBI:30616"/>
    </ligand>
</feature>
<evidence type="ECO:0000255" key="1"/>
<evidence type="ECO:0000255" key="2">
    <source>
        <dbReference type="PROSITE-ProRule" id="PRU00434"/>
    </source>
</evidence>
<evidence type="ECO:0000255" key="3">
    <source>
        <dbReference type="PROSITE-ProRule" id="PRU00441"/>
    </source>
</evidence>
<evidence type="ECO:0000269" key="4">
    <source>
    </source>
</evidence>
<evidence type="ECO:0000305" key="5"/>
<keyword id="KW-0067">ATP-binding</keyword>
<keyword id="KW-0150">Chloroplast</keyword>
<keyword id="KW-0472">Membrane</keyword>
<keyword id="KW-0547">Nucleotide-binding</keyword>
<keyword id="KW-0934">Plastid</keyword>
<keyword id="KW-1185">Reference proteome</keyword>
<keyword id="KW-0809">Transit peptide</keyword>
<keyword id="KW-0812">Transmembrane</keyword>
<keyword id="KW-1133">Transmembrane helix</keyword>
<keyword id="KW-0813">Transport</keyword>
<sequence>MAQQVLGCTSRPIRVSLHRCSVITTSDTIRRKNLRFVRNPRLSFSLQSSTRNYRLPSINCSTVNGAVAETAEYYEGEGDNVSLAEKIRQCIDFLRTILPGGSWWSFSDEVDGRFIAKPVTVWRALSRMWELVAEDRWVIFAAFSTLIVAALSEITIPHFLTASIFSAQSGDIAVFHRNVKLLVTLCVTSGICSGIRGCFFGIANMILVKRMRETLYSTLLFQDISFFDSQTVGDLTSRLGSDCQQVSRVIGNDLNMIFRNVLQGTGALIYLLILSWPLGLCTLVICCILAAVMFVYGMYQKKTAKLIQEITASANEVAQETYSLMRTVRVYGTEKQEFKRYNHWLQRLADISLRQSAAYGIWNWSFNTLYHATQIIAVLVGGLSILAGQITAEQLTKFLLYSEWLIYATWWVGDNLSSLMQSVGASEKVFQMMDLKPSDQFISKGTRLQRLTGHIEFVDVSFSYPSRDEVAVVQNVNISVHPGEVVAIVGLSGSGKSTLVNLLLQLYEPTSGQILLDGVPLKELDVKWLRQRIGYVGQEPKLFRTDISSNIKYGCDRNISQEDIISAAKQAYAHDFITALPNGYNTIVDDDLLSGGQKQRIAIARAILRDPRILILDEATSALDAESEHNVKGVLRSIGNDSATKRSVIVIAHRLSTIQAADRIVAMDSGRVVEMGSHKELLSKDGLYARLTKRQNDAVL</sequence>
<comment type="subcellular location">
    <subcellularLocation>
        <location evidence="4">Plastid</location>
        <location evidence="4">Chloroplast membrane</location>
        <topology evidence="3 4">Multi-pass membrane protein</topology>
    </subcellularLocation>
</comment>
<comment type="similarity">
    <text evidence="5">Belongs to the ABC transporter superfamily. ABCB family. Multidrug resistance exporter (TC 3.A.1.201) subfamily.</text>
</comment>
<comment type="sequence caution" evidence="5">
    <conflict type="erroneous gene model prediction">
        <sequence resource="EMBL-CDS" id="AAG52334"/>
    </conflict>
</comment>
<comment type="sequence caution" evidence="5">
    <conflict type="erroneous gene model prediction">
        <sequence resource="EMBL-CDS" id="AAG52466"/>
    </conflict>
</comment>
<organism>
    <name type="scientific">Arabidopsis thaliana</name>
    <name type="common">Mouse-ear cress</name>
    <dbReference type="NCBI Taxonomy" id="3702"/>
    <lineage>
        <taxon>Eukaryota</taxon>
        <taxon>Viridiplantae</taxon>
        <taxon>Streptophyta</taxon>
        <taxon>Embryophyta</taxon>
        <taxon>Tracheophyta</taxon>
        <taxon>Spermatophyta</taxon>
        <taxon>Magnoliopsida</taxon>
        <taxon>eudicotyledons</taxon>
        <taxon>Gunneridae</taxon>
        <taxon>Pentapetalae</taxon>
        <taxon>rosids</taxon>
        <taxon>malvids</taxon>
        <taxon>Brassicales</taxon>
        <taxon>Brassicaceae</taxon>
        <taxon>Camelineae</taxon>
        <taxon>Arabidopsis</taxon>
    </lineage>
</organism>
<accession>Q8RY46</accession>
<accession>Q9CAB3</accession>
<accession>Q9CAL0</accession>
<proteinExistence type="evidence at protein level"/>
<reference key="1">
    <citation type="journal article" date="2001" name="J. Biol. Chem.">
        <title>The Arabidopsis thaliana ABC protein superfamily, a complete inventory.</title>
        <authorList>
            <person name="Sanchez-Fernandez R."/>
            <person name="Davies T.G."/>
            <person name="Coleman J.O."/>
            <person name="Rea P.A."/>
        </authorList>
    </citation>
    <scope>NUCLEOTIDE SEQUENCE [MRNA]</scope>
    <scope>GENE FAMILY</scope>
    <scope>NOMENCLATURE</scope>
</reference>
<reference key="2">
    <citation type="journal article" date="2000" name="Nature">
        <title>Sequence and analysis of chromosome 1 of the plant Arabidopsis thaliana.</title>
        <authorList>
            <person name="Theologis A."/>
            <person name="Ecker J.R."/>
            <person name="Palm C.J."/>
            <person name="Federspiel N.A."/>
            <person name="Kaul S."/>
            <person name="White O."/>
            <person name="Alonso J."/>
            <person name="Altafi H."/>
            <person name="Araujo R."/>
            <person name="Bowman C.L."/>
            <person name="Brooks S.Y."/>
            <person name="Buehler E."/>
            <person name="Chan A."/>
            <person name="Chao Q."/>
            <person name="Chen H."/>
            <person name="Cheuk R.F."/>
            <person name="Chin C.W."/>
            <person name="Chung M.K."/>
            <person name="Conn L."/>
            <person name="Conway A.B."/>
            <person name="Conway A.R."/>
            <person name="Creasy T.H."/>
            <person name="Dewar K."/>
            <person name="Dunn P."/>
            <person name="Etgu P."/>
            <person name="Feldblyum T.V."/>
            <person name="Feng J.-D."/>
            <person name="Fong B."/>
            <person name="Fujii C.Y."/>
            <person name="Gill J.E."/>
            <person name="Goldsmith A.D."/>
            <person name="Haas B."/>
            <person name="Hansen N.F."/>
            <person name="Hughes B."/>
            <person name="Huizar L."/>
            <person name="Hunter J.L."/>
            <person name="Jenkins J."/>
            <person name="Johnson-Hopson C."/>
            <person name="Khan S."/>
            <person name="Khaykin E."/>
            <person name="Kim C.J."/>
            <person name="Koo H.L."/>
            <person name="Kremenetskaia I."/>
            <person name="Kurtz D.B."/>
            <person name="Kwan A."/>
            <person name="Lam B."/>
            <person name="Langin-Hooper S."/>
            <person name="Lee A."/>
            <person name="Lee J.M."/>
            <person name="Lenz C.A."/>
            <person name="Li J.H."/>
            <person name="Li Y.-P."/>
            <person name="Lin X."/>
            <person name="Liu S.X."/>
            <person name="Liu Z.A."/>
            <person name="Luros J.S."/>
            <person name="Maiti R."/>
            <person name="Marziali A."/>
            <person name="Militscher J."/>
            <person name="Miranda M."/>
            <person name="Nguyen M."/>
            <person name="Nierman W.C."/>
            <person name="Osborne B.I."/>
            <person name="Pai G."/>
            <person name="Peterson J."/>
            <person name="Pham P.K."/>
            <person name="Rizzo M."/>
            <person name="Rooney T."/>
            <person name="Rowley D."/>
            <person name="Sakano H."/>
            <person name="Salzberg S.L."/>
            <person name="Schwartz J.R."/>
            <person name="Shinn P."/>
            <person name="Southwick A.M."/>
            <person name="Sun H."/>
            <person name="Tallon L.J."/>
            <person name="Tambunga G."/>
            <person name="Toriumi M.J."/>
            <person name="Town C.D."/>
            <person name="Utterback T."/>
            <person name="Van Aken S."/>
            <person name="Vaysberg M."/>
            <person name="Vysotskaia V.S."/>
            <person name="Walker M."/>
            <person name="Wu D."/>
            <person name="Yu G."/>
            <person name="Fraser C.M."/>
            <person name="Venter J.C."/>
            <person name="Davis R.W."/>
        </authorList>
    </citation>
    <scope>NUCLEOTIDE SEQUENCE [LARGE SCALE GENOMIC DNA]</scope>
    <source>
        <strain>cv. Columbia</strain>
    </source>
</reference>
<reference key="3">
    <citation type="journal article" date="2017" name="Plant J.">
        <title>Araport11: a complete reannotation of the Arabidopsis thaliana reference genome.</title>
        <authorList>
            <person name="Cheng C.Y."/>
            <person name="Krishnakumar V."/>
            <person name="Chan A.P."/>
            <person name="Thibaud-Nissen F."/>
            <person name="Schobel S."/>
            <person name="Town C.D."/>
        </authorList>
    </citation>
    <scope>GENOME REANNOTATION</scope>
    <source>
        <strain>cv. Columbia</strain>
    </source>
</reference>
<reference key="4">
    <citation type="submission" date="2006-07" db="EMBL/GenBank/DDBJ databases">
        <title>Large-scale analysis of RIKEN Arabidopsis full-length (RAFL) cDNAs.</title>
        <authorList>
            <person name="Totoki Y."/>
            <person name="Seki M."/>
            <person name="Ishida J."/>
            <person name="Nakajima M."/>
            <person name="Enju A."/>
            <person name="Kamiya A."/>
            <person name="Narusaka M."/>
            <person name="Shin-i T."/>
            <person name="Nakagawa M."/>
            <person name="Sakamoto N."/>
            <person name="Oishi K."/>
            <person name="Kohara Y."/>
            <person name="Kobayashi M."/>
            <person name="Toyoda A."/>
            <person name="Sakaki Y."/>
            <person name="Sakurai T."/>
            <person name="Iida K."/>
            <person name="Akiyama K."/>
            <person name="Satou M."/>
            <person name="Toyoda T."/>
            <person name="Konagaya A."/>
            <person name="Carninci P."/>
            <person name="Kawai J."/>
            <person name="Hayashizaki Y."/>
            <person name="Shinozaki K."/>
        </authorList>
    </citation>
    <scope>NUCLEOTIDE SEQUENCE [LARGE SCALE MRNA]</scope>
    <source>
        <strain>cv. Columbia</strain>
    </source>
</reference>
<reference key="5">
    <citation type="journal article" date="2008" name="PLoS ONE">
        <title>Sorting signals, N-terminal modifications and abundance of the chloroplast proteome.</title>
        <authorList>
            <person name="Zybailov B."/>
            <person name="Rutschow H."/>
            <person name="Friso G."/>
            <person name="Rudella A."/>
            <person name="Emanuelsson O."/>
            <person name="Sun Q."/>
            <person name="van Wijk K.J."/>
        </authorList>
    </citation>
    <scope>IDENTIFICATION BY MASS SPECTROMETRY</scope>
    <scope>SUBCELLULAR LOCATION [LARGE SCALE ANALYSIS]</scope>
</reference>
<reference key="6">
    <citation type="journal article" date="2008" name="Trends Plant Sci.">
        <title>Plant ABC proteins - a unified nomenclature and updated inventory.</title>
        <authorList>
            <person name="Verrier P.J."/>
            <person name="Bird D."/>
            <person name="Burla B."/>
            <person name="Dassa E."/>
            <person name="Forestier C."/>
            <person name="Geisler M."/>
            <person name="Klein M."/>
            <person name="Kolukisaoglu H.U."/>
            <person name="Lee Y."/>
            <person name="Martinoia E."/>
            <person name="Murphy A."/>
            <person name="Rea P.A."/>
            <person name="Samuels L."/>
            <person name="Schulz B."/>
            <person name="Spalding E.J."/>
            <person name="Yazaki K."/>
            <person name="Theodoulou F.L."/>
        </authorList>
    </citation>
    <scope>GENE FAMILY</scope>
    <scope>NOMENCLATURE</scope>
</reference>